<sequence>MPSSKKKKENVPVMSMAGLIRYYEEEHEKYKVDPIYVIIASIVLVAVVVAVTKIIPP</sequence>
<keyword id="KW-1003">Cell membrane</keyword>
<keyword id="KW-0472">Membrane</keyword>
<keyword id="KW-0653">Protein transport</keyword>
<keyword id="KW-1185">Reference proteome</keyword>
<keyword id="KW-0811">Translocation</keyword>
<keyword id="KW-0812">Transmembrane</keyword>
<keyword id="KW-1133">Transmembrane helix</keyword>
<keyword id="KW-0813">Transport</keyword>
<dbReference type="EMBL" id="CP000682">
    <property type="protein sequence ID" value="ABP96429.1"/>
    <property type="molecule type" value="Genomic_DNA"/>
</dbReference>
<dbReference type="RefSeq" id="WP_012022216.1">
    <property type="nucleotide sequence ID" value="NZ_CP139956.1"/>
</dbReference>
<dbReference type="SMR" id="A4YJ27"/>
<dbReference type="STRING" id="399549.Msed_2292"/>
<dbReference type="KEGG" id="mse:Msed_2292"/>
<dbReference type="eggNOG" id="arCOG02957">
    <property type="taxonomic scope" value="Archaea"/>
</dbReference>
<dbReference type="HOGENOM" id="CLU_208205_2_1_2"/>
<dbReference type="Proteomes" id="UP000000242">
    <property type="component" value="Chromosome"/>
</dbReference>
<dbReference type="GO" id="GO:0005886">
    <property type="term" value="C:plasma membrane"/>
    <property type="evidence" value="ECO:0007669"/>
    <property type="project" value="UniProtKB-SubCell"/>
</dbReference>
<dbReference type="GO" id="GO:0015031">
    <property type="term" value="P:protein transport"/>
    <property type="evidence" value="ECO:0007669"/>
    <property type="project" value="UniProtKB-UniRule"/>
</dbReference>
<dbReference type="HAMAP" id="MF_00751">
    <property type="entry name" value="SecG"/>
    <property type="match status" value="1"/>
</dbReference>
<dbReference type="InterPro" id="IPR023531">
    <property type="entry name" value="Preprot_translocase_SecG"/>
</dbReference>
<dbReference type="InterPro" id="IPR016482">
    <property type="entry name" value="SecG/Sec61-beta/Sbh"/>
</dbReference>
<dbReference type="NCBIfam" id="NF002318">
    <property type="entry name" value="PRK01253.1"/>
    <property type="match status" value="1"/>
</dbReference>
<dbReference type="Pfam" id="PF03911">
    <property type="entry name" value="Sec61_beta"/>
    <property type="match status" value="1"/>
</dbReference>
<feature type="chain" id="PRO_1000133345" description="Preprotein translocase subunit SecG">
    <location>
        <begin position="1"/>
        <end position="57"/>
    </location>
</feature>
<feature type="topological domain" description="Cytoplasmic" evidence="1">
    <location>
        <begin position="1"/>
        <end position="33"/>
    </location>
</feature>
<feature type="transmembrane region" description="Helical" evidence="1">
    <location>
        <begin position="34"/>
        <end position="55"/>
    </location>
</feature>
<feature type="topological domain" description="Extracellular" evidence="1">
    <location>
        <begin position="56"/>
        <end position="57"/>
    </location>
</feature>
<comment type="function">
    <text evidence="1">Involved in protein export. The function of the beta subunit is unknown, but it may be involved in stabilization of the trimeric complex.</text>
</comment>
<comment type="subunit">
    <text evidence="1">Component of the protein translocase complex. Heterotrimer consisting of alpha (SecY), beta (SecG) and gamma (SecE) subunits. Can form oligomers of the heterotrimer.</text>
</comment>
<comment type="subcellular location">
    <subcellularLocation>
        <location evidence="1">Cell membrane</location>
        <topology evidence="1">Single-pass membrane protein</topology>
    </subcellularLocation>
</comment>
<comment type="similarity">
    <text evidence="1">Belongs to the SEC61-beta family.</text>
</comment>
<gene>
    <name evidence="1" type="primary">secG</name>
    <name type="ordered locus">Msed_2292</name>
</gene>
<reference key="1">
    <citation type="journal article" date="2008" name="Appl. Environ. Microbiol.">
        <title>The genome sequence of the metal-mobilizing, extremely thermoacidophilic archaeon Metallosphaera sedula provides insights into bioleaching-associated metabolism.</title>
        <authorList>
            <person name="Auernik K.S."/>
            <person name="Maezato Y."/>
            <person name="Blum P.H."/>
            <person name="Kelly R.M."/>
        </authorList>
    </citation>
    <scope>NUCLEOTIDE SEQUENCE [LARGE SCALE GENOMIC DNA]</scope>
    <source>
        <strain>ATCC 51363 / DSM 5348 / JCM 9185 / NBRC 15509 / TH2</strain>
    </source>
</reference>
<accession>A4YJ27</accession>
<evidence type="ECO:0000255" key="1">
    <source>
        <dbReference type="HAMAP-Rule" id="MF_00751"/>
    </source>
</evidence>
<name>SECG_METS5</name>
<organism>
    <name type="scientific">Metallosphaera sedula (strain ATCC 51363 / DSM 5348 / JCM 9185 / NBRC 15509 / TH2)</name>
    <dbReference type="NCBI Taxonomy" id="399549"/>
    <lineage>
        <taxon>Archaea</taxon>
        <taxon>Thermoproteota</taxon>
        <taxon>Thermoprotei</taxon>
        <taxon>Sulfolobales</taxon>
        <taxon>Sulfolobaceae</taxon>
        <taxon>Metallosphaera</taxon>
    </lineage>
</organism>
<protein>
    <recommendedName>
        <fullName evidence="1">Preprotein translocase subunit SecG</fullName>
    </recommendedName>
    <alternativeName>
        <fullName evidence="1">Protein transport protein Sec61 subunit beta homolog</fullName>
    </alternativeName>
</protein>
<proteinExistence type="inferred from homology"/>